<dbReference type="EMBL" id="M55009">
    <property type="protein sequence ID" value="AAA31968.2"/>
    <property type="molecule type" value="Genomic_DNA"/>
</dbReference>
<dbReference type="PIR" id="A53257">
    <property type="entry name" value="A53257"/>
</dbReference>
<dbReference type="SMR" id="P22067"/>
<dbReference type="GO" id="GO:0005743">
    <property type="term" value="C:mitochondrial inner membrane"/>
    <property type="evidence" value="ECO:0007669"/>
    <property type="project" value="UniProtKB-SubCell"/>
</dbReference>
<dbReference type="GO" id="GO:0045259">
    <property type="term" value="C:proton-transporting ATP synthase complex"/>
    <property type="evidence" value="ECO:0007669"/>
    <property type="project" value="UniProtKB-KW"/>
</dbReference>
<dbReference type="GO" id="GO:0046933">
    <property type="term" value="F:proton-transporting ATP synthase activity, rotational mechanism"/>
    <property type="evidence" value="ECO:0007669"/>
    <property type="project" value="TreeGrafter"/>
</dbReference>
<dbReference type="CDD" id="cd00310">
    <property type="entry name" value="ATP-synt_Fo_a_6"/>
    <property type="match status" value="1"/>
</dbReference>
<dbReference type="Gene3D" id="1.20.120.220">
    <property type="entry name" value="ATP synthase, F0 complex, subunit A"/>
    <property type="match status" value="1"/>
</dbReference>
<dbReference type="InterPro" id="IPR000568">
    <property type="entry name" value="ATP_synth_F0_asu"/>
</dbReference>
<dbReference type="InterPro" id="IPR045083">
    <property type="entry name" value="ATP_synth_F0_asu_bact/mt"/>
</dbReference>
<dbReference type="InterPro" id="IPR035908">
    <property type="entry name" value="F0_ATP_A_sf"/>
</dbReference>
<dbReference type="PANTHER" id="PTHR11410">
    <property type="entry name" value="ATP SYNTHASE SUBUNIT A"/>
    <property type="match status" value="1"/>
</dbReference>
<dbReference type="PANTHER" id="PTHR11410:SF0">
    <property type="entry name" value="ATP SYNTHASE SUBUNIT A"/>
    <property type="match status" value="1"/>
</dbReference>
<dbReference type="Pfam" id="PF00119">
    <property type="entry name" value="ATP-synt_A"/>
    <property type="match status" value="1"/>
</dbReference>
<dbReference type="PRINTS" id="PR00123">
    <property type="entry name" value="ATPASEA"/>
</dbReference>
<dbReference type="SUPFAM" id="SSF81336">
    <property type="entry name" value="F1F0 ATP synthase subunit A"/>
    <property type="match status" value="1"/>
</dbReference>
<proteinExistence type="inferred from homology"/>
<comment type="function">
    <text>Mitochondrial membrane ATP synthase (F(1)F(0) ATP synthase or Complex V) produces ATP from ADP in the presence of a proton gradient across the membrane which is generated by electron transport complexes of the respiratory chain. F-type ATPases consist of two structural domains, F(1) - containing the extramembraneous catalytic core and F(0) - containing the membrane proton channel, linked together by a central stalk and a peripheral stalk. During catalysis, ATP synthesis in the catalytic domain of F(1) is coupled via a rotary mechanism of the central stalk subunits to proton translocation. Key component of the proton channel; it may play a direct role in the translocation of protons across the membrane.</text>
</comment>
<comment type="subunit">
    <text>F-type ATPases have 2 components, CF(1) - the catalytic core - and CF(0) - the membrane proton channel. CF(1) has five subunits: alpha(3), beta(3), gamma(1), delta(1), epsilon(1). CF(0) has three main subunits: a, b and c.</text>
</comment>
<comment type="subcellular location">
    <subcellularLocation>
        <location>Mitochondrion inner membrane</location>
        <topology>Multi-pass membrane protein</topology>
    </subcellularLocation>
</comment>
<comment type="similarity">
    <text evidence="2">Belongs to the ATPase A chain family.</text>
</comment>
<evidence type="ECO:0000255" key="1"/>
<evidence type="ECO:0000305" key="2"/>
<sequence>SFFYSLFKGTYNFIYVTIYSYLVDRTKMFFPFFFYLFLFICLSNLVGIVPFSFTITSHLNITFSLSFLVWWATCLLGFYESGLAFIAIFYVKGIPFVLVPFWALIEVISFIFRSVGLSLR</sequence>
<feature type="chain" id="PRO_0000082142" description="ATP synthase subunit a">
    <location>
        <begin position="1" status="less than"/>
        <end position="120" status="greater than"/>
    </location>
</feature>
<feature type="transmembrane region" description="Helical" evidence="1">
    <location>
        <begin position="2"/>
        <end position="22"/>
    </location>
</feature>
<feature type="transmembrane region" description="Helical" evidence="1">
    <location>
        <begin position="29"/>
        <end position="49"/>
    </location>
</feature>
<feature type="transmembrane region" description="Helical" evidence="1">
    <location>
        <begin position="59"/>
        <end position="79"/>
    </location>
</feature>
<feature type="transmembrane region" description="Helical" evidence="1">
    <location>
        <begin position="94"/>
        <end position="116"/>
    </location>
</feature>
<feature type="non-terminal residue">
    <location>
        <position position="1"/>
    </location>
</feature>
<feature type="non-terminal residue">
    <location>
        <position position="120"/>
    </location>
</feature>
<geneLocation type="mitochondrion"/>
<protein>
    <recommendedName>
        <fullName>ATP synthase subunit a</fullName>
    </recommendedName>
    <alternativeName>
        <fullName>F-ATPase protein 6</fullName>
    </alternativeName>
</protein>
<reference key="1">
    <citation type="submission" date="2000-03" db="EMBL/GenBank/DDBJ databases">
        <authorList>
            <person name="McLaughlin G.L."/>
            <person name="Vodkin M.H."/>
            <person name="Huizinga H.W."/>
        </authorList>
    </citation>
    <scope>NUCLEOTIDE SEQUENCE [GENOMIC DNA]</scope>
    <scope>SEQUENCE REVISION</scope>
</reference>
<reference key="2">
    <citation type="journal article" date="1991" name="J. Clin. Microbiol.">
        <title>Amplification of repetitive DNA for the specific detection of Naegleria fowleri.</title>
        <authorList>
            <person name="McLaughlin G.L."/>
            <person name="Vodkin M.H."/>
            <person name="Huizinga H.W."/>
        </authorList>
    </citation>
    <scope>NUCLEOTIDE SEQUENCE [GENOMIC DNA] OF 1-119</scope>
    <source>
        <strain>ATCC 30894 / Lee</strain>
    </source>
</reference>
<organism>
    <name type="scientific">Naegleria fowleri</name>
    <name type="common">Brain eating amoeba</name>
    <dbReference type="NCBI Taxonomy" id="5763"/>
    <lineage>
        <taxon>Eukaryota</taxon>
        <taxon>Discoba</taxon>
        <taxon>Heterolobosea</taxon>
        <taxon>Tetramitia</taxon>
        <taxon>Eutetramitia</taxon>
        <taxon>Vahlkampfiidae</taxon>
        <taxon>Naegleria</taxon>
    </lineage>
</organism>
<accession>P22067</accession>
<accession>Q9MD39</accession>
<keyword id="KW-0066">ATP synthesis</keyword>
<keyword id="KW-0138">CF(0)</keyword>
<keyword id="KW-0375">Hydrogen ion transport</keyword>
<keyword id="KW-0406">Ion transport</keyword>
<keyword id="KW-0472">Membrane</keyword>
<keyword id="KW-0496">Mitochondrion</keyword>
<keyword id="KW-0999">Mitochondrion inner membrane</keyword>
<keyword id="KW-0812">Transmembrane</keyword>
<keyword id="KW-1133">Transmembrane helix</keyword>
<keyword id="KW-0813">Transport</keyword>
<gene>
    <name type="primary">ATP6</name>
    <name type="synonym">OLI2</name>
</gene>
<name>ATP6_NAEFO</name>